<evidence type="ECO:0000256" key="1">
    <source>
        <dbReference type="SAM" id="MobiDB-lite"/>
    </source>
</evidence>
<evidence type="ECO:0000269" key="2">
    <source>
    </source>
</evidence>
<evidence type="ECO:0000269" key="3">
    <source>
    </source>
</evidence>
<evidence type="ECO:0000269" key="4">
    <source>
    </source>
</evidence>
<evidence type="ECO:0000305" key="5"/>
<evidence type="ECO:0007829" key="6">
    <source>
        <dbReference type="PDB" id="7Z0O"/>
    </source>
</evidence>
<feature type="chain" id="PRO_0000097447" description="RNA polymerase I-specific transcription initiation factor RRN5">
    <location>
        <begin position="1"/>
        <end position="363"/>
    </location>
</feature>
<feature type="region of interest" description="Disordered" evidence="1">
    <location>
        <begin position="301"/>
        <end position="344"/>
    </location>
</feature>
<feature type="compositionally biased region" description="Basic and acidic residues" evidence="1">
    <location>
        <begin position="302"/>
        <end position="313"/>
    </location>
</feature>
<feature type="compositionally biased region" description="Low complexity" evidence="1">
    <location>
        <begin position="317"/>
        <end position="328"/>
    </location>
</feature>
<feature type="compositionally biased region" description="Acidic residues" evidence="1">
    <location>
        <begin position="333"/>
        <end position="344"/>
    </location>
</feature>
<feature type="sequence conflict" description="In Ref. 1; AAC49257." evidence="5" ref="1">
    <original>A</original>
    <variation>R</variation>
    <location>
        <position position="25"/>
    </location>
</feature>
<feature type="sequence conflict" description="In Ref. 1; AAC49257." evidence="5" ref="1">
    <original>SA</original>
    <variation>RP</variation>
    <location>
        <begin position="197"/>
        <end position="198"/>
    </location>
</feature>
<feature type="sequence conflict" description="In Ref. 1; AAC49257." evidence="5" ref="1">
    <original>R</original>
    <variation>G</variation>
    <location>
        <position position="260"/>
    </location>
</feature>
<feature type="helix" evidence="6">
    <location>
        <begin position="5"/>
        <end position="21"/>
    </location>
</feature>
<feature type="strand" evidence="6">
    <location>
        <begin position="35"/>
        <end position="37"/>
    </location>
</feature>
<feature type="strand" evidence="6">
    <location>
        <begin position="56"/>
        <end position="62"/>
    </location>
</feature>
<feature type="helix" evidence="6">
    <location>
        <begin position="64"/>
        <end position="76"/>
    </location>
</feature>
<feature type="helix" evidence="6">
    <location>
        <begin position="79"/>
        <end position="81"/>
    </location>
</feature>
<feature type="helix" evidence="6">
    <location>
        <begin position="82"/>
        <end position="85"/>
    </location>
</feature>
<feature type="helix" evidence="6">
    <location>
        <begin position="86"/>
        <end position="88"/>
    </location>
</feature>
<feature type="helix" evidence="6">
    <location>
        <begin position="94"/>
        <end position="109"/>
    </location>
</feature>
<feature type="helix" evidence="6">
    <location>
        <begin position="129"/>
        <end position="146"/>
    </location>
</feature>
<feature type="helix" evidence="6">
    <location>
        <begin position="147"/>
        <end position="149"/>
    </location>
</feature>
<feature type="strand" evidence="6">
    <location>
        <begin position="161"/>
        <end position="163"/>
    </location>
</feature>
<feature type="helix" evidence="6">
    <location>
        <begin position="165"/>
        <end position="174"/>
    </location>
</feature>
<feature type="helix" evidence="6">
    <location>
        <begin position="176"/>
        <end position="178"/>
    </location>
</feature>
<feature type="helix" evidence="6">
    <location>
        <begin position="182"/>
        <end position="184"/>
    </location>
</feature>
<feature type="strand" evidence="6">
    <location>
        <begin position="186"/>
        <end position="190"/>
    </location>
</feature>
<feature type="helix" evidence="6">
    <location>
        <begin position="196"/>
        <end position="217"/>
    </location>
</feature>
<feature type="helix" evidence="6">
    <location>
        <begin position="220"/>
        <end position="223"/>
    </location>
</feature>
<feature type="strand" evidence="6">
    <location>
        <begin position="226"/>
        <end position="228"/>
    </location>
</feature>
<feature type="strand" evidence="6">
    <location>
        <begin position="242"/>
        <end position="244"/>
    </location>
</feature>
<feature type="helix" evidence="6">
    <location>
        <begin position="246"/>
        <end position="255"/>
    </location>
</feature>
<feature type="helix" evidence="6">
    <location>
        <begin position="258"/>
        <end position="260"/>
    </location>
</feature>
<feature type="helix" evidence="6">
    <location>
        <begin position="265"/>
        <end position="275"/>
    </location>
</feature>
<feature type="strand" evidence="6">
    <location>
        <begin position="282"/>
        <end position="284"/>
    </location>
</feature>
<feature type="strand" evidence="6">
    <location>
        <begin position="286"/>
        <end position="289"/>
    </location>
</feature>
<feature type="helix" evidence="6">
    <location>
        <begin position="290"/>
        <end position="301"/>
    </location>
</feature>
<feature type="helix" evidence="6">
    <location>
        <begin position="341"/>
        <end position="362"/>
    </location>
</feature>
<sequence length="363" mass="41721">MEHQQLRKYVELYNKEVEEFYNGAASGRPAEFHPSKVHVKSIHEKAGTANAGVEISSVGVDWDSEEKNTFFWCLSRYSIHRVDEWRSLLPRKSAMEILGYYRLLRRASASARSRKAGDDGAPIAYEMSAEWVALETKLSETVMAITEGAAEVADEEGHCEGLIDYESWKRRWVAIYSHSRIAEIRPLPRHALPLSRSATQTLERCVSRYTRTLLWCTALAGMASRSVSARAAESRGHKSLPTVVTRRQVERALCTEARSRDLHVLPRRIVLTLRKWELDYPREGKLFRTKEMAHLFLQSQLSRRDAPPVHQDENQENQENQENQEQDNTASEGESEAERDEIDEADLFRSALHENQLLKWLSK</sequence>
<gene>
    <name type="primary">RRN5</name>
    <name type="ordered locus">YLR141W</name>
    <name type="ORF">L3165</name>
    <name type="ORF">L9606.3</name>
</gene>
<accession>Q02983</accession>
<accession>D6VYD5</accession>
<accession>Q12061</accession>
<comment type="function">
    <text evidence="4">Component of the UAF (upstream activation factor) complex which interacts with the upstream element of the RNA polymerase I promoter and forms a stable preinitiation complex. Together with SPT15/TBP UAF seems to stimulate basal transcription to a fully activated level.</text>
</comment>
<comment type="subunit">
    <text evidence="3">Component of the UAF (upstream activation factor) complex which consists of UAF30, RRN5, RRN9, RRN10, and histones H3 and H4.</text>
</comment>
<comment type="subcellular location">
    <subcellularLocation>
        <location evidence="2">Nucleus</location>
        <location evidence="2">Nucleolus</location>
    </subcellularLocation>
</comment>
<keyword id="KW-0002">3D-structure</keyword>
<keyword id="KW-0539">Nucleus</keyword>
<keyword id="KW-1185">Reference proteome</keyword>
<keyword id="KW-0804">Transcription</keyword>
<keyword id="KW-0805">Transcription regulation</keyword>
<protein>
    <recommendedName>
        <fullName>RNA polymerase I-specific transcription initiation factor RRN5</fullName>
    </recommendedName>
</protein>
<reference key="1">
    <citation type="journal article" date="1996" name="Genes Dev.">
        <title>Multiprotein transcription factor UAF interacts with the upstream element of the yeast RNA polymerase I promoter and forms a stable preinitiation complex.</title>
        <authorList>
            <person name="Keys D.A."/>
            <person name="Lee B.-S."/>
            <person name="Dodd J.A."/>
            <person name="Nguyen T.T."/>
            <person name="Vu L."/>
            <person name="Fantino E."/>
            <person name="Burson L.M."/>
            <person name="Nogi Y."/>
            <person name="Nomura M."/>
        </authorList>
    </citation>
    <scope>NUCLEOTIDE SEQUENCE [GENOMIC DNA]</scope>
    <scope>IDENTIFICATION IN THE UAF COMPLEX</scope>
    <source>
        <strain>NOY697</strain>
    </source>
</reference>
<reference key="2">
    <citation type="journal article" date="1997" name="Nature">
        <title>The nucleotide sequence of Saccharomyces cerevisiae chromosome XII.</title>
        <authorList>
            <person name="Johnston M."/>
            <person name="Hillier L.W."/>
            <person name="Riles L."/>
            <person name="Albermann K."/>
            <person name="Andre B."/>
            <person name="Ansorge W."/>
            <person name="Benes V."/>
            <person name="Brueckner M."/>
            <person name="Delius H."/>
            <person name="Dubois E."/>
            <person name="Duesterhoeft A."/>
            <person name="Entian K.-D."/>
            <person name="Floeth M."/>
            <person name="Goffeau A."/>
            <person name="Hebling U."/>
            <person name="Heumann K."/>
            <person name="Heuss-Neitzel D."/>
            <person name="Hilbert H."/>
            <person name="Hilger F."/>
            <person name="Kleine K."/>
            <person name="Koetter P."/>
            <person name="Louis E.J."/>
            <person name="Messenguy F."/>
            <person name="Mewes H.-W."/>
            <person name="Miosga T."/>
            <person name="Moestl D."/>
            <person name="Mueller-Auer S."/>
            <person name="Nentwich U."/>
            <person name="Obermaier B."/>
            <person name="Piravandi E."/>
            <person name="Pohl T.M."/>
            <person name="Portetelle D."/>
            <person name="Purnelle B."/>
            <person name="Rechmann S."/>
            <person name="Rieger M."/>
            <person name="Rinke M."/>
            <person name="Rose M."/>
            <person name="Scharfe M."/>
            <person name="Scherens B."/>
            <person name="Scholler P."/>
            <person name="Schwager C."/>
            <person name="Schwarz S."/>
            <person name="Underwood A.P."/>
            <person name="Urrestarazu L.A."/>
            <person name="Vandenbol M."/>
            <person name="Verhasselt P."/>
            <person name="Vierendeels F."/>
            <person name="Voet M."/>
            <person name="Volckaert G."/>
            <person name="Voss H."/>
            <person name="Wambutt R."/>
            <person name="Wedler E."/>
            <person name="Wedler H."/>
            <person name="Zimmermann F.K."/>
            <person name="Zollner A."/>
            <person name="Hani J."/>
            <person name="Hoheisel J.D."/>
        </authorList>
    </citation>
    <scope>NUCLEOTIDE SEQUENCE [LARGE SCALE GENOMIC DNA]</scope>
    <source>
        <strain>ATCC 204508 / S288c</strain>
    </source>
</reference>
<reference key="3">
    <citation type="journal article" date="2014" name="G3 (Bethesda)">
        <title>The reference genome sequence of Saccharomyces cerevisiae: Then and now.</title>
        <authorList>
            <person name="Engel S.R."/>
            <person name="Dietrich F.S."/>
            <person name="Fisk D.G."/>
            <person name="Binkley G."/>
            <person name="Balakrishnan R."/>
            <person name="Costanzo M.C."/>
            <person name="Dwight S.S."/>
            <person name="Hitz B.C."/>
            <person name="Karra K."/>
            <person name="Nash R.S."/>
            <person name="Weng S."/>
            <person name="Wong E.D."/>
            <person name="Lloyd P."/>
            <person name="Skrzypek M.S."/>
            <person name="Miyasato S.R."/>
            <person name="Simison M."/>
            <person name="Cherry J.M."/>
        </authorList>
    </citation>
    <scope>GENOME REANNOTATION</scope>
    <source>
        <strain>ATCC 204508 / S288c</strain>
    </source>
</reference>
<reference key="4">
    <citation type="journal article" date="1998" name="J. Biol. Chem.">
        <title>Reconstitution of yeast RNA polymerase I transcription in vitro from purified components. TATA-binding protein is not required for basal transcription.</title>
        <authorList>
            <person name="Keener J."/>
            <person name="Josaitis C.A."/>
            <person name="Dodd J.A."/>
            <person name="Nomura M."/>
        </authorList>
    </citation>
    <scope>FUNCTION OF THE UAF COMPLEX</scope>
</reference>
<reference key="5">
    <citation type="journal article" date="2003" name="Nature">
        <title>Global analysis of protein localization in budding yeast.</title>
        <authorList>
            <person name="Huh W.-K."/>
            <person name="Falvo J.V."/>
            <person name="Gerke L.C."/>
            <person name="Carroll A.S."/>
            <person name="Howson R.W."/>
            <person name="Weissman J.S."/>
            <person name="O'Shea E.K."/>
        </authorList>
    </citation>
    <scope>SUBCELLULAR LOCATION [LARGE SCALE ANALYSIS]</scope>
</reference>
<name>RRN5_YEAST</name>
<dbReference type="EMBL" id="U43680">
    <property type="protein sequence ID" value="AAC49257.1"/>
    <property type="molecule type" value="Genomic_DNA"/>
</dbReference>
<dbReference type="EMBL" id="U53881">
    <property type="protein sequence ID" value="AAB82391.1"/>
    <property type="molecule type" value="Genomic_DNA"/>
</dbReference>
<dbReference type="EMBL" id="X91258">
    <property type="protein sequence ID" value="CAA62660.1"/>
    <property type="molecule type" value="Genomic_DNA"/>
</dbReference>
<dbReference type="EMBL" id="Z73312">
    <property type="protein sequence ID" value="CAA97713.1"/>
    <property type="molecule type" value="Genomic_DNA"/>
</dbReference>
<dbReference type="EMBL" id="BK006945">
    <property type="protein sequence ID" value="DAA09451.1"/>
    <property type="molecule type" value="Genomic_DNA"/>
</dbReference>
<dbReference type="PIR" id="S59337">
    <property type="entry name" value="S59337"/>
</dbReference>
<dbReference type="RefSeq" id="NP_013242.1">
    <property type="nucleotide sequence ID" value="NM_001182028.1"/>
</dbReference>
<dbReference type="PDB" id="7Z0O">
    <property type="method" value="EM"/>
    <property type="resolution" value="2.80 A"/>
    <property type="chains" value="D=1-363"/>
</dbReference>
<dbReference type="PDBsum" id="7Z0O"/>
<dbReference type="EMDB" id="EMD-14428"/>
<dbReference type="SMR" id="Q02983"/>
<dbReference type="BioGRID" id="31409">
    <property type="interactions" value="98"/>
</dbReference>
<dbReference type="ComplexPortal" id="CPX-1101">
    <property type="entry name" value="RNA polymerase I upstream activating factor complex"/>
</dbReference>
<dbReference type="DIP" id="DIP-3964N"/>
<dbReference type="FunCoup" id="Q02983">
    <property type="interactions" value="62"/>
</dbReference>
<dbReference type="IntAct" id="Q02983">
    <property type="interactions" value="8"/>
</dbReference>
<dbReference type="STRING" id="4932.YLR141W"/>
<dbReference type="iPTMnet" id="Q02983"/>
<dbReference type="PaxDb" id="4932-YLR141W"/>
<dbReference type="PeptideAtlas" id="Q02983"/>
<dbReference type="EnsemblFungi" id="YLR141W_mRNA">
    <property type="protein sequence ID" value="YLR141W"/>
    <property type="gene ID" value="YLR141W"/>
</dbReference>
<dbReference type="GeneID" id="850832"/>
<dbReference type="KEGG" id="sce:YLR141W"/>
<dbReference type="AGR" id="SGD:S000004131"/>
<dbReference type="SGD" id="S000004131">
    <property type="gene designation" value="RRN5"/>
</dbReference>
<dbReference type="VEuPathDB" id="FungiDB:YLR141W"/>
<dbReference type="eggNOG" id="ENOG502RY38">
    <property type="taxonomic scope" value="Eukaryota"/>
</dbReference>
<dbReference type="HOGENOM" id="CLU_024706_0_0_1"/>
<dbReference type="InParanoid" id="Q02983"/>
<dbReference type="OMA" id="DEEGHCE"/>
<dbReference type="OrthoDB" id="2240312at2759"/>
<dbReference type="BioCyc" id="YEAST:G3O-32280-MONOMER"/>
<dbReference type="BioGRID-ORCS" id="850832">
    <property type="hits" value="3 hits in 10 CRISPR screens"/>
</dbReference>
<dbReference type="PRO" id="PR:Q02983"/>
<dbReference type="Proteomes" id="UP000002311">
    <property type="component" value="Chromosome XII"/>
</dbReference>
<dbReference type="RNAct" id="Q02983">
    <property type="molecule type" value="protein"/>
</dbReference>
<dbReference type="GO" id="GO:0005730">
    <property type="term" value="C:nucleolus"/>
    <property type="evidence" value="ECO:0000314"/>
    <property type="project" value="SGD"/>
</dbReference>
<dbReference type="GO" id="GO:0005634">
    <property type="term" value="C:nucleus"/>
    <property type="evidence" value="ECO:0000303"/>
    <property type="project" value="ComplexPortal"/>
</dbReference>
<dbReference type="GO" id="GO:0000500">
    <property type="term" value="C:RNA polymerase I upstream activating factor complex"/>
    <property type="evidence" value="ECO:0000314"/>
    <property type="project" value="SGD"/>
</dbReference>
<dbReference type="GO" id="GO:0000182">
    <property type="term" value="F:rDNA binding"/>
    <property type="evidence" value="ECO:0000318"/>
    <property type="project" value="GO_Central"/>
</dbReference>
<dbReference type="GO" id="GO:0001181">
    <property type="term" value="F:RNA polymerase I general transcription initiation factor activity"/>
    <property type="evidence" value="ECO:0000314"/>
    <property type="project" value="SGD"/>
</dbReference>
<dbReference type="GO" id="GO:0006325">
    <property type="term" value="P:chromatin organization"/>
    <property type="evidence" value="ECO:0000315"/>
    <property type="project" value="SGD"/>
</dbReference>
<dbReference type="GO" id="GO:0042790">
    <property type="term" value="P:nucleolar large rRNA transcription by RNA polymerase I"/>
    <property type="evidence" value="ECO:0000314"/>
    <property type="project" value="ComplexPortal"/>
</dbReference>
<dbReference type="GO" id="GO:0045943">
    <property type="term" value="P:positive regulation of transcription by RNA polymerase I"/>
    <property type="evidence" value="ECO:0000314"/>
    <property type="project" value="ComplexPortal"/>
</dbReference>
<dbReference type="GO" id="GO:0006361">
    <property type="term" value="P:transcription initiation at RNA polymerase I promoter"/>
    <property type="evidence" value="ECO:0000318"/>
    <property type="project" value="GO_Central"/>
</dbReference>
<dbReference type="InterPro" id="IPR039601">
    <property type="entry name" value="Rrn5"/>
</dbReference>
<dbReference type="PANTHER" id="PTHR28079">
    <property type="entry name" value="RNA POLYMERASE I-SPECIFIC TRANSCRIPTION INITIATION FACTOR RRN5"/>
    <property type="match status" value="1"/>
</dbReference>
<dbReference type="PANTHER" id="PTHR28079:SF1">
    <property type="entry name" value="RNA POLYMERASE I-SPECIFIC TRANSCRIPTION INITIATION FACTOR RRN5"/>
    <property type="match status" value="1"/>
</dbReference>
<proteinExistence type="evidence at protein level"/>
<organism>
    <name type="scientific">Saccharomyces cerevisiae (strain ATCC 204508 / S288c)</name>
    <name type="common">Baker's yeast</name>
    <dbReference type="NCBI Taxonomy" id="559292"/>
    <lineage>
        <taxon>Eukaryota</taxon>
        <taxon>Fungi</taxon>
        <taxon>Dikarya</taxon>
        <taxon>Ascomycota</taxon>
        <taxon>Saccharomycotina</taxon>
        <taxon>Saccharomycetes</taxon>
        <taxon>Saccharomycetales</taxon>
        <taxon>Saccharomycetaceae</taxon>
        <taxon>Saccharomyces</taxon>
    </lineage>
</organism>